<accession>Q92C26</accession>
<gene>
    <name evidence="1" type="primary">truB</name>
    <name type="ordered locus">lin1365</name>
</gene>
<dbReference type="EC" id="5.4.99.25" evidence="1"/>
<dbReference type="EMBL" id="AL596168">
    <property type="protein sequence ID" value="CAC96596.1"/>
    <property type="molecule type" value="Genomic_DNA"/>
</dbReference>
<dbReference type="PIR" id="AD1603">
    <property type="entry name" value="AD1603"/>
</dbReference>
<dbReference type="RefSeq" id="WP_010991498.1">
    <property type="nucleotide sequence ID" value="NC_003212.1"/>
</dbReference>
<dbReference type="SMR" id="Q92C26"/>
<dbReference type="STRING" id="272626.gene:17565696"/>
<dbReference type="GeneID" id="93234745"/>
<dbReference type="KEGG" id="lin:truB"/>
<dbReference type="eggNOG" id="COG0130">
    <property type="taxonomic scope" value="Bacteria"/>
</dbReference>
<dbReference type="HOGENOM" id="CLU_032087_0_1_9"/>
<dbReference type="OrthoDB" id="9802309at2"/>
<dbReference type="Proteomes" id="UP000002513">
    <property type="component" value="Chromosome"/>
</dbReference>
<dbReference type="GO" id="GO:0003723">
    <property type="term" value="F:RNA binding"/>
    <property type="evidence" value="ECO:0007669"/>
    <property type="project" value="InterPro"/>
</dbReference>
<dbReference type="GO" id="GO:0160148">
    <property type="term" value="F:tRNA pseudouridine(55) synthase activity"/>
    <property type="evidence" value="ECO:0007669"/>
    <property type="project" value="UniProtKB-EC"/>
</dbReference>
<dbReference type="GO" id="GO:1990481">
    <property type="term" value="P:mRNA pseudouridine synthesis"/>
    <property type="evidence" value="ECO:0007669"/>
    <property type="project" value="TreeGrafter"/>
</dbReference>
<dbReference type="GO" id="GO:0031119">
    <property type="term" value="P:tRNA pseudouridine synthesis"/>
    <property type="evidence" value="ECO:0007669"/>
    <property type="project" value="UniProtKB-UniRule"/>
</dbReference>
<dbReference type="CDD" id="cd02573">
    <property type="entry name" value="PseudoU_synth_EcTruB"/>
    <property type="match status" value="1"/>
</dbReference>
<dbReference type="FunFam" id="3.30.2350.10:FF:000011">
    <property type="entry name" value="tRNA pseudouridine synthase B"/>
    <property type="match status" value="1"/>
</dbReference>
<dbReference type="Gene3D" id="3.30.2350.10">
    <property type="entry name" value="Pseudouridine synthase"/>
    <property type="match status" value="1"/>
</dbReference>
<dbReference type="HAMAP" id="MF_01080">
    <property type="entry name" value="TruB_bact"/>
    <property type="match status" value="1"/>
</dbReference>
<dbReference type="InterPro" id="IPR020103">
    <property type="entry name" value="PsdUridine_synth_cat_dom_sf"/>
</dbReference>
<dbReference type="InterPro" id="IPR002501">
    <property type="entry name" value="PsdUridine_synth_N"/>
</dbReference>
<dbReference type="InterPro" id="IPR014780">
    <property type="entry name" value="tRNA_psdUridine_synth_TruB"/>
</dbReference>
<dbReference type="InterPro" id="IPR032819">
    <property type="entry name" value="TruB_C"/>
</dbReference>
<dbReference type="NCBIfam" id="TIGR00431">
    <property type="entry name" value="TruB"/>
    <property type="match status" value="1"/>
</dbReference>
<dbReference type="PANTHER" id="PTHR13767:SF2">
    <property type="entry name" value="PSEUDOURIDYLATE SYNTHASE TRUB1"/>
    <property type="match status" value="1"/>
</dbReference>
<dbReference type="PANTHER" id="PTHR13767">
    <property type="entry name" value="TRNA-PSEUDOURIDINE SYNTHASE"/>
    <property type="match status" value="1"/>
</dbReference>
<dbReference type="Pfam" id="PF16198">
    <property type="entry name" value="TruB_C_2"/>
    <property type="match status" value="1"/>
</dbReference>
<dbReference type="Pfam" id="PF01509">
    <property type="entry name" value="TruB_N"/>
    <property type="match status" value="1"/>
</dbReference>
<dbReference type="SUPFAM" id="SSF55120">
    <property type="entry name" value="Pseudouridine synthase"/>
    <property type="match status" value="1"/>
</dbReference>
<evidence type="ECO:0000255" key="1">
    <source>
        <dbReference type="HAMAP-Rule" id="MF_01080"/>
    </source>
</evidence>
<keyword id="KW-0413">Isomerase</keyword>
<keyword id="KW-0819">tRNA processing</keyword>
<proteinExistence type="inferred from homology"/>
<comment type="function">
    <text evidence="1">Responsible for synthesis of pseudouridine from uracil-55 in the psi GC loop of transfer RNAs.</text>
</comment>
<comment type="catalytic activity">
    <reaction evidence="1">
        <text>uridine(55) in tRNA = pseudouridine(55) in tRNA</text>
        <dbReference type="Rhea" id="RHEA:42532"/>
        <dbReference type="Rhea" id="RHEA-COMP:10101"/>
        <dbReference type="Rhea" id="RHEA-COMP:10102"/>
        <dbReference type="ChEBI" id="CHEBI:65314"/>
        <dbReference type="ChEBI" id="CHEBI:65315"/>
        <dbReference type="EC" id="5.4.99.25"/>
    </reaction>
</comment>
<comment type="similarity">
    <text evidence="1">Belongs to the pseudouridine synthase TruB family. Type 1 subfamily.</text>
</comment>
<sequence>MNGIIPLWKERGMTSHDCVFKLRKILHTKKVGHTGTLDPEVEGVLPICIGRATKLAEYVTDEGKVYVAEITLGKSTTTEDATGETVATKELAEISAEELQAALTKLTGKITQIPPMFSAVKVNGKKLYEYARAGIEVERPSRQVDIYSLVRLDGVSPLTESNPTFKLEISCGKGTYIRTLAVMIGELLGYPAHMSKLERTRSGFFKKEDCLTLAEIDEKMQANDTDFLYPLEKGIESMAKLEIDEEIHAKVLNGVLLPKSLFQTVENEPRVALIFQEKLTAIYKPHPEKQDLFKPEKVIELQQA</sequence>
<organism>
    <name type="scientific">Listeria innocua serovar 6a (strain ATCC BAA-680 / CLIP 11262)</name>
    <dbReference type="NCBI Taxonomy" id="272626"/>
    <lineage>
        <taxon>Bacteria</taxon>
        <taxon>Bacillati</taxon>
        <taxon>Bacillota</taxon>
        <taxon>Bacilli</taxon>
        <taxon>Bacillales</taxon>
        <taxon>Listeriaceae</taxon>
        <taxon>Listeria</taxon>
    </lineage>
</organism>
<protein>
    <recommendedName>
        <fullName evidence="1">tRNA pseudouridine synthase B</fullName>
        <ecNumber evidence="1">5.4.99.25</ecNumber>
    </recommendedName>
    <alternativeName>
        <fullName evidence="1">tRNA pseudouridine(55) synthase</fullName>
        <shortName evidence="1">Psi55 synthase</shortName>
    </alternativeName>
    <alternativeName>
        <fullName evidence="1">tRNA pseudouridylate synthase</fullName>
    </alternativeName>
    <alternativeName>
        <fullName evidence="1">tRNA-uridine isomerase</fullName>
    </alternativeName>
</protein>
<reference key="1">
    <citation type="journal article" date="2001" name="Science">
        <title>Comparative genomics of Listeria species.</title>
        <authorList>
            <person name="Glaser P."/>
            <person name="Frangeul L."/>
            <person name="Buchrieser C."/>
            <person name="Rusniok C."/>
            <person name="Amend A."/>
            <person name="Baquero F."/>
            <person name="Berche P."/>
            <person name="Bloecker H."/>
            <person name="Brandt P."/>
            <person name="Chakraborty T."/>
            <person name="Charbit A."/>
            <person name="Chetouani F."/>
            <person name="Couve E."/>
            <person name="de Daruvar A."/>
            <person name="Dehoux P."/>
            <person name="Domann E."/>
            <person name="Dominguez-Bernal G."/>
            <person name="Duchaud E."/>
            <person name="Durant L."/>
            <person name="Dussurget O."/>
            <person name="Entian K.-D."/>
            <person name="Fsihi H."/>
            <person name="Garcia-del Portillo F."/>
            <person name="Garrido P."/>
            <person name="Gautier L."/>
            <person name="Goebel W."/>
            <person name="Gomez-Lopez N."/>
            <person name="Hain T."/>
            <person name="Hauf J."/>
            <person name="Jackson D."/>
            <person name="Jones L.-M."/>
            <person name="Kaerst U."/>
            <person name="Kreft J."/>
            <person name="Kuhn M."/>
            <person name="Kunst F."/>
            <person name="Kurapkat G."/>
            <person name="Madueno E."/>
            <person name="Maitournam A."/>
            <person name="Mata Vicente J."/>
            <person name="Ng E."/>
            <person name="Nedjari H."/>
            <person name="Nordsiek G."/>
            <person name="Novella S."/>
            <person name="de Pablos B."/>
            <person name="Perez-Diaz J.-C."/>
            <person name="Purcell R."/>
            <person name="Remmel B."/>
            <person name="Rose M."/>
            <person name="Schlueter T."/>
            <person name="Simoes N."/>
            <person name="Tierrez A."/>
            <person name="Vazquez-Boland J.-A."/>
            <person name="Voss H."/>
            <person name="Wehland J."/>
            <person name="Cossart P."/>
        </authorList>
    </citation>
    <scope>NUCLEOTIDE SEQUENCE [LARGE SCALE GENOMIC DNA]</scope>
    <source>
        <strain>ATCC BAA-680 / CLIP 11262</strain>
    </source>
</reference>
<name>TRUB_LISIN</name>
<feature type="chain" id="PRO_0000121857" description="tRNA pseudouridine synthase B">
    <location>
        <begin position="1"/>
        <end position="304"/>
    </location>
</feature>
<feature type="active site" description="Nucleophile" evidence="1">
    <location>
        <position position="38"/>
    </location>
</feature>